<sequence>MTQVYDITIIGGGPVGLFAAFYAHLRQAKVKIIDSLPQLGGQPAILYPEKAILDIPAFPSLTGQELTDNLLAQLAPFDTTICLNETLTAIEPGETITLTTNKGNHQTKTLIIAMGGGAFKPRPLEIDGADSFDNVHYHVSNIQQYADKDIVVLGGGDSAVDWSLAFEKIAKTTQIIHRRDNFRALEHSVEELKQSSVTIHTPFIPKGLSGENGRASAIDFDKVKSEDKLTLSFDHLFVNYGFKSSVGTLKEWGLELNRHRIVVNSKQETSVPGIYAIGDCCFYEGKIDLIATGLGEAPTAVNNAMNYLNPNEKVQPKHSTSL</sequence>
<protein>
    <recommendedName>
        <fullName>Ferredoxin--NADP reductase</fullName>
        <shortName>FNR</shortName>
        <shortName>Fd-NADP(+) reductase</shortName>
        <ecNumber>1.18.1.2</ecNumber>
    </recommendedName>
</protein>
<organism>
    <name type="scientific">Streptococcus suis (strain 98HAH33)</name>
    <dbReference type="NCBI Taxonomy" id="391296"/>
    <lineage>
        <taxon>Bacteria</taxon>
        <taxon>Bacillati</taxon>
        <taxon>Bacillota</taxon>
        <taxon>Bacilli</taxon>
        <taxon>Lactobacillales</taxon>
        <taxon>Streptococcaceae</taxon>
        <taxon>Streptococcus</taxon>
    </lineage>
</organism>
<reference key="1">
    <citation type="journal article" date="2007" name="PLoS ONE">
        <title>A glimpse of streptococcal toxic shock syndrome from comparative genomics of S. suis 2 Chinese isolates.</title>
        <authorList>
            <person name="Chen C."/>
            <person name="Tang J."/>
            <person name="Dong W."/>
            <person name="Wang C."/>
            <person name="Feng Y."/>
            <person name="Wang J."/>
            <person name="Zheng F."/>
            <person name="Pan X."/>
            <person name="Liu D."/>
            <person name="Li M."/>
            <person name="Song Y."/>
            <person name="Zhu X."/>
            <person name="Sun H."/>
            <person name="Feng T."/>
            <person name="Guo Z."/>
            <person name="Ju A."/>
            <person name="Ge J."/>
            <person name="Dong Y."/>
            <person name="Sun W."/>
            <person name="Jiang Y."/>
            <person name="Wang J."/>
            <person name="Yan J."/>
            <person name="Yang H."/>
            <person name="Wang X."/>
            <person name="Gao G.F."/>
            <person name="Yang R."/>
            <person name="Wang J."/>
            <person name="Yu J."/>
        </authorList>
    </citation>
    <scope>NUCLEOTIDE SEQUENCE [LARGE SCALE GENOMIC DNA]</scope>
    <source>
        <strain>98HAH33</strain>
    </source>
</reference>
<accession>A4W460</accession>
<keyword id="KW-0274">FAD</keyword>
<keyword id="KW-0285">Flavoprotein</keyword>
<keyword id="KW-0521">NADP</keyword>
<keyword id="KW-0560">Oxidoreductase</keyword>
<name>FENR_STRS2</name>
<evidence type="ECO:0000250" key="1"/>
<evidence type="ECO:0000305" key="2"/>
<feature type="chain" id="PRO_0000364975" description="Ferredoxin--NADP reductase">
    <location>
        <begin position="1"/>
        <end position="322"/>
    </location>
</feature>
<feature type="binding site" evidence="1">
    <location>
        <position position="87"/>
    </location>
    <ligand>
        <name>FAD</name>
        <dbReference type="ChEBI" id="CHEBI:57692"/>
    </ligand>
</feature>
<feature type="binding site" evidence="1">
    <location>
        <position position="119"/>
    </location>
    <ligand>
        <name>FAD</name>
        <dbReference type="ChEBI" id="CHEBI:57692"/>
    </ligand>
</feature>
<feature type="binding site" evidence="1">
    <location>
        <position position="279"/>
    </location>
    <ligand>
        <name>FAD</name>
        <dbReference type="ChEBI" id="CHEBI:57692"/>
    </ligand>
</feature>
<feature type="binding site" evidence="1">
    <location>
        <position position="320"/>
    </location>
    <ligand>
        <name>FAD</name>
        <dbReference type="ChEBI" id="CHEBI:57692"/>
    </ligand>
</feature>
<proteinExistence type="inferred from homology"/>
<comment type="catalytic activity">
    <reaction>
        <text>2 reduced [2Fe-2S]-[ferredoxin] + NADP(+) + H(+) = 2 oxidized [2Fe-2S]-[ferredoxin] + NADPH</text>
        <dbReference type="Rhea" id="RHEA:20125"/>
        <dbReference type="Rhea" id="RHEA-COMP:10000"/>
        <dbReference type="Rhea" id="RHEA-COMP:10001"/>
        <dbReference type="ChEBI" id="CHEBI:15378"/>
        <dbReference type="ChEBI" id="CHEBI:33737"/>
        <dbReference type="ChEBI" id="CHEBI:33738"/>
        <dbReference type="ChEBI" id="CHEBI:57783"/>
        <dbReference type="ChEBI" id="CHEBI:58349"/>
        <dbReference type="EC" id="1.18.1.2"/>
    </reaction>
</comment>
<comment type="cofactor">
    <cofactor evidence="1">
        <name>FAD</name>
        <dbReference type="ChEBI" id="CHEBI:57692"/>
    </cofactor>
    <text evidence="1">Binds 1 FAD per subunit.</text>
</comment>
<comment type="subunit">
    <text evidence="1">Homodimer.</text>
</comment>
<comment type="similarity">
    <text evidence="2">Belongs to the ferredoxin--NADP reductase type 2 family.</text>
</comment>
<comment type="sequence caution" evidence="2">
    <conflict type="frameshift">
        <sequence resource="EMBL-CDS" id="ABP93149"/>
    </conflict>
</comment>
<gene>
    <name type="ordered locus">SSU98_1991</name>
</gene>
<dbReference type="EC" id="1.18.1.2"/>
<dbReference type="EMBL" id="CP000408">
    <property type="protein sequence ID" value="ABP93149.1"/>
    <property type="status" value="ALT_FRAME"/>
    <property type="molecule type" value="Genomic_DNA"/>
</dbReference>
<dbReference type="SMR" id="A4W460"/>
<dbReference type="KEGG" id="ssv:SSU98_1991"/>
<dbReference type="HOGENOM" id="CLU_031864_5_5_9"/>
<dbReference type="GO" id="GO:0004324">
    <property type="term" value="F:ferredoxin-NADP+ reductase activity"/>
    <property type="evidence" value="ECO:0007669"/>
    <property type="project" value="UniProtKB-UniRule"/>
</dbReference>
<dbReference type="GO" id="GO:0050660">
    <property type="term" value="F:flavin adenine dinucleotide binding"/>
    <property type="evidence" value="ECO:0007669"/>
    <property type="project" value="UniProtKB-UniRule"/>
</dbReference>
<dbReference type="GO" id="GO:0050661">
    <property type="term" value="F:NADP binding"/>
    <property type="evidence" value="ECO:0007669"/>
    <property type="project" value="UniProtKB-UniRule"/>
</dbReference>
<dbReference type="Gene3D" id="3.50.50.60">
    <property type="entry name" value="FAD/NAD(P)-binding domain"/>
    <property type="match status" value="2"/>
</dbReference>
<dbReference type="HAMAP" id="MF_01685">
    <property type="entry name" value="FENR2"/>
    <property type="match status" value="1"/>
</dbReference>
<dbReference type="InterPro" id="IPR036188">
    <property type="entry name" value="FAD/NAD-bd_sf"/>
</dbReference>
<dbReference type="InterPro" id="IPR023753">
    <property type="entry name" value="FAD/NAD-binding_dom"/>
</dbReference>
<dbReference type="InterPro" id="IPR022890">
    <property type="entry name" value="Fd--NADP_Rdtase_type_2"/>
</dbReference>
<dbReference type="InterPro" id="IPR050097">
    <property type="entry name" value="Ferredoxin-NADP_redctase_2"/>
</dbReference>
<dbReference type="PANTHER" id="PTHR48105">
    <property type="entry name" value="THIOREDOXIN REDUCTASE 1-RELATED-RELATED"/>
    <property type="match status" value="1"/>
</dbReference>
<dbReference type="Pfam" id="PF07992">
    <property type="entry name" value="Pyr_redox_2"/>
    <property type="match status" value="1"/>
</dbReference>
<dbReference type="PRINTS" id="PR00368">
    <property type="entry name" value="FADPNR"/>
</dbReference>
<dbReference type="PRINTS" id="PR00469">
    <property type="entry name" value="PNDRDTASEII"/>
</dbReference>
<dbReference type="SUPFAM" id="SSF51905">
    <property type="entry name" value="FAD/NAD(P)-binding domain"/>
    <property type="match status" value="1"/>
</dbReference>